<protein>
    <recommendedName>
        <fullName>Nuclear receptor subfamily 1 group D member 1</fullName>
    </recommendedName>
    <alternativeName>
        <fullName>Rev-erbA-alpha</fullName>
    </alternativeName>
    <alternativeName>
        <fullName>V-erbA-related protein 1</fullName>
        <shortName>EAR-1</shortName>
    </alternativeName>
</protein>
<proteinExistence type="evidence at protein level"/>
<accession>Q08E02</accession>
<feature type="chain" id="PRO_0000387612" description="Nuclear receptor subfamily 1 group D member 1">
    <location>
        <begin position="1"/>
        <end position="613"/>
    </location>
</feature>
<feature type="domain" description="NR LBD" evidence="5">
    <location>
        <begin position="285"/>
        <end position="613"/>
    </location>
</feature>
<feature type="DNA-binding region" description="Nuclear receptor" evidence="4">
    <location>
        <begin position="130"/>
        <end position="206"/>
    </location>
</feature>
<feature type="zinc finger region" description="NR C4-type" evidence="4">
    <location>
        <begin position="133"/>
        <end position="153"/>
    </location>
</feature>
<feature type="zinc finger region" description="NR C4-type" evidence="4">
    <location>
        <begin position="170"/>
        <end position="194"/>
    </location>
</feature>
<feature type="region of interest" description="Modulating">
    <location>
        <begin position="1"/>
        <end position="129"/>
    </location>
</feature>
<feature type="region of interest" description="Disordered" evidence="6">
    <location>
        <begin position="1"/>
        <end position="102"/>
    </location>
</feature>
<feature type="region of interest" description="Required for phosphorylation by CSNK1E and cytoplasmic localization" evidence="3">
    <location>
        <begin position="1"/>
        <end position="70"/>
    </location>
</feature>
<feature type="region of interest" description="Crucial for activation of GJA1" evidence="1">
    <location>
        <begin position="49"/>
        <end position="285"/>
    </location>
</feature>
<feature type="region of interest" description="Disordered" evidence="6">
    <location>
        <begin position="233"/>
        <end position="286"/>
    </location>
</feature>
<feature type="compositionally biased region" description="Polar residues" evidence="6">
    <location>
        <begin position="1"/>
        <end position="48"/>
    </location>
</feature>
<feature type="compositionally biased region" description="Low complexity" evidence="6">
    <location>
        <begin position="69"/>
        <end position="102"/>
    </location>
</feature>
<feature type="compositionally biased region" description="Pro residues" evidence="6">
    <location>
        <begin position="239"/>
        <end position="262"/>
    </location>
</feature>
<feature type="binding site" evidence="1">
    <location>
        <position position="417"/>
    </location>
    <ligand>
        <name>heme</name>
        <dbReference type="ChEBI" id="CHEBI:30413"/>
    </ligand>
</feature>
<feature type="binding site" evidence="1">
    <location>
        <position position="601"/>
    </location>
    <ligand>
        <name>heme</name>
        <dbReference type="ChEBI" id="CHEBI:30413"/>
    </ligand>
</feature>
<feature type="modified residue" description="Phosphoserine; by GSK3-beta" evidence="2">
    <location>
        <position position="55"/>
    </location>
</feature>
<feature type="modified residue" description="Phosphoserine; by GSK3-beta" evidence="2">
    <location>
        <position position="59"/>
    </location>
</feature>
<feature type="modified residue" description="N6-acetyllysine; by KAT5" evidence="1">
    <location>
        <position position="192"/>
    </location>
</feature>
<feature type="modified residue" description="N6-acetyllysine; by KAT5" evidence="1">
    <location>
        <position position="193"/>
    </location>
</feature>
<feature type="modified residue" description="Phosphothreonine; by CDK1" evidence="3">
    <location>
        <position position="275"/>
    </location>
</feature>
<feature type="modified residue" description="N6-acetyllysine" evidence="2">
    <location>
        <position position="590"/>
    </location>
</feature>
<organism>
    <name type="scientific">Bos taurus</name>
    <name type="common">Bovine</name>
    <dbReference type="NCBI Taxonomy" id="9913"/>
    <lineage>
        <taxon>Eukaryota</taxon>
        <taxon>Metazoa</taxon>
        <taxon>Chordata</taxon>
        <taxon>Craniata</taxon>
        <taxon>Vertebrata</taxon>
        <taxon>Euteleostomi</taxon>
        <taxon>Mammalia</taxon>
        <taxon>Eutheria</taxon>
        <taxon>Laurasiatheria</taxon>
        <taxon>Artiodactyla</taxon>
        <taxon>Ruminantia</taxon>
        <taxon>Pecora</taxon>
        <taxon>Bovidae</taxon>
        <taxon>Bovinae</taxon>
        <taxon>Bos</taxon>
    </lineage>
</organism>
<keyword id="KW-0007">Acetylation</keyword>
<keyword id="KW-0010">Activator</keyword>
<keyword id="KW-0090">Biological rhythms</keyword>
<keyword id="KW-0966">Cell projection</keyword>
<keyword id="KW-0963">Cytoplasm</keyword>
<keyword id="KW-0221">Differentiation</keyword>
<keyword id="KW-0238">DNA-binding</keyword>
<keyword id="KW-0349">Heme</keyword>
<keyword id="KW-0408">Iron</keyword>
<keyword id="KW-0479">Metal-binding</keyword>
<keyword id="KW-0539">Nucleus</keyword>
<keyword id="KW-0597">Phosphoprotein</keyword>
<keyword id="KW-0675">Receptor</keyword>
<keyword id="KW-1185">Reference proteome</keyword>
<keyword id="KW-0678">Repressor</keyword>
<keyword id="KW-0770">Synapse</keyword>
<keyword id="KW-0804">Transcription</keyword>
<keyword id="KW-0805">Transcription regulation</keyword>
<keyword id="KW-0832">Ubl conjugation</keyword>
<keyword id="KW-0862">Zinc</keyword>
<keyword id="KW-0863">Zinc-finger</keyword>
<dbReference type="EMBL" id="BC123488">
    <property type="protein sequence ID" value="AAI23489.1"/>
    <property type="molecule type" value="mRNA"/>
</dbReference>
<dbReference type="RefSeq" id="NP_001071568.1">
    <property type="nucleotide sequence ID" value="NM_001078100.2"/>
</dbReference>
<dbReference type="SMR" id="Q08E02"/>
<dbReference type="CORUM" id="Q08E02"/>
<dbReference type="FunCoup" id="Q08E02">
    <property type="interactions" value="84"/>
</dbReference>
<dbReference type="STRING" id="9913.ENSBTAP00000065454"/>
<dbReference type="PaxDb" id="9913-ENSBTAP00000016154"/>
<dbReference type="Ensembl" id="ENSBTAT00000016154.6">
    <property type="protein sequence ID" value="ENSBTAP00000016154.5"/>
    <property type="gene ID" value="ENSBTAG00000012178.7"/>
</dbReference>
<dbReference type="GeneID" id="768225"/>
<dbReference type="KEGG" id="bta:768225"/>
<dbReference type="CTD" id="9572"/>
<dbReference type="VEuPathDB" id="HostDB:ENSBTAG00000012178"/>
<dbReference type="VGNC" id="VGNC:32228">
    <property type="gene designation" value="NR1D1"/>
</dbReference>
<dbReference type="eggNOG" id="KOG4846">
    <property type="taxonomic scope" value="Eukaryota"/>
</dbReference>
<dbReference type="GeneTree" id="ENSGT00940000160548"/>
<dbReference type="HOGENOM" id="CLU_007368_2_4_1"/>
<dbReference type="InParanoid" id="Q08E02"/>
<dbReference type="OMA" id="LCPTHMY"/>
<dbReference type="OrthoDB" id="7634782at2759"/>
<dbReference type="TreeFam" id="TF328382"/>
<dbReference type="Reactome" id="R-BTA-383280">
    <property type="pathway name" value="Nuclear Receptor transcription pathway"/>
</dbReference>
<dbReference type="Proteomes" id="UP000009136">
    <property type="component" value="Chromosome 19"/>
</dbReference>
<dbReference type="Bgee" id="ENSBTAG00000012178">
    <property type="expression patterns" value="Expressed in retina and 104 other cell types or tissues"/>
</dbReference>
<dbReference type="GO" id="GO:0005737">
    <property type="term" value="C:cytoplasm"/>
    <property type="evidence" value="ECO:0000250"/>
    <property type="project" value="UniProtKB"/>
</dbReference>
<dbReference type="GO" id="GO:0030425">
    <property type="term" value="C:dendrite"/>
    <property type="evidence" value="ECO:0000250"/>
    <property type="project" value="UniProtKB"/>
</dbReference>
<dbReference type="GO" id="GO:0043197">
    <property type="term" value="C:dendritic spine"/>
    <property type="evidence" value="ECO:0000250"/>
    <property type="project" value="UniProtKB"/>
</dbReference>
<dbReference type="GO" id="GO:0005634">
    <property type="term" value="C:nucleus"/>
    <property type="evidence" value="ECO:0000250"/>
    <property type="project" value="UniProtKB"/>
</dbReference>
<dbReference type="GO" id="GO:0070888">
    <property type="term" value="F:E-box binding"/>
    <property type="evidence" value="ECO:0000250"/>
    <property type="project" value="UniProtKB"/>
</dbReference>
<dbReference type="GO" id="GO:0004879">
    <property type="term" value="F:nuclear receptor activity"/>
    <property type="evidence" value="ECO:0000318"/>
    <property type="project" value="GO_Central"/>
</dbReference>
<dbReference type="GO" id="GO:0000978">
    <property type="term" value="F:RNA polymerase II cis-regulatory region sequence-specific DNA binding"/>
    <property type="evidence" value="ECO:0000318"/>
    <property type="project" value="GO_Central"/>
</dbReference>
<dbReference type="GO" id="GO:0001222">
    <property type="term" value="F:transcription corepressor binding"/>
    <property type="evidence" value="ECO:0000250"/>
    <property type="project" value="UniProtKB"/>
</dbReference>
<dbReference type="GO" id="GO:0008270">
    <property type="term" value="F:zinc ion binding"/>
    <property type="evidence" value="ECO:0007669"/>
    <property type="project" value="UniProtKB-KW"/>
</dbReference>
<dbReference type="GO" id="GO:0030154">
    <property type="term" value="P:cell differentiation"/>
    <property type="evidence" value="ECO:0000318"/>
    <property type="project" value="GO_Central"/>
</dbReference>
<dbReference type="GO" id="GO:0071347">
    <property type="term" value="P:cellular response to interleukin-1"/>
    <property type="evidence" value="ECO:0000250"/>
    <property type="project" value="UniProtKB"/>
</dbReference>
<dbReference type="GO" id="GO:0071356">
    <property type="term" value="P:cellular response to tumor necrosis factor"/>
    <property type="evidence" value="ECO:0000250"/>
    <property type="project" value="UniProtKB"/>
</dbReference>
<dbReference type="GO" id="GO:0042632">
    <property type="term" value="P:cholesterol homeostasis"/>
    <property type="evidence" value="ECO:0000250"/>
    <property type="project" value="UniProtKB"/>
</dbReference>
<dbReference type="GO" id="GO:0032922">
    <property type="term" value="P:circadian regulation of gene expression"/>
    <property type="evidence" value="ECO:0000250"/>
    <property type="project" value="UniProtKB"/>
</dbReference>
<dbReference type="GO" id="GO:0060086">
    <property type="term" value="P:circadian temperature homeostasis"/>
    <property type="evidence" value="ECO:0000250"/>
    <property type="project" value="UniProtKB"/>
</dbReference>
<dbReference type="GO" id="GO:0005978">
    <property type="term" value="P:glycogen biosynthetic process"/>
    <property type="evidence" value="ECO:0000250"/>
    <property type="project" value="UniProtKB"/>
</dbReference>
<dbReference type="GO" id="GO:0009755">
    <property type="term" value="P:hormone-mediated signaling pathway"/>
    <property type="evidence" value="ECO:0000318"/>
    <property type="project" value="GO_Central"/>
</dbReference>
<dbReference type="GO" id="GO:0001678">
    <property type="term" value="P:intracellular glucose homeostasis"/>
    <property type="evidence" value="ECO:0000250"/>
    <property type="project" value="UniProtKB"/>
</dbReference>
<dbReference type="GO" id="GO:0030522">
    <property type="term" value="P:intracellular receptor signaling pathway"/>
    <property type="evidence" value="ECO:0000318"/>
    <property type="project" value="GO_Central"/>
</dbReference>
<dbReference type="GO" id="GO:0061889">
    <property type="term" value="P:negative regulation of astrocyte activation"/>
    <property type="evidence" value="ECO:0000250"/>
    <property type="project" value="UniProtKB"/>
</dbReference>
<dbReference type="GO" id="GO:0043124">
    <property type="term" value="P:negative regulation of canonical NF-kappaB signal transduction"/>
    <property type="evidence" value="ECO:0000250"/>
    <property type="project" value="UniProtKB"/>
</dbReference>
<dbReference type="GO" id="GO:0045892">
    <property type="term" value="P:negative regulation of DNA-templated transcription"/>
    <property type="evidence" value="ECO:0000250"/>
    <property type="project" value="UniProtKB"/>
</dbReference>
<dbReference type="GO" id="GO:0050728">
    <property type="term" value="P:negative regulation of inflammatory response"/>
    <property type="evidence" value="ECO:0000250"/>
    <property type="project" value="UniProtKB"/>
</dbReference>
<dbReference type="GO" id="GO:1903979">
    <property type="term" value="P:negative regulation of microglial cell activation"/>
    <property type="evidence" value="ECO:0000250"/>
    <property type="project" value="UniProtKB"/>
</dbReference>
<dbReference type="GO" id="GO:0150079">
    <property type="term" value="P:negative regulation of neuroinflammatory response"/>
    <property type="evidence" value="ECO:0000250"/>
    <property type="project" value="UniProtKB"/>
</dbReference>
<dbReference type="GO" id="GO:0000122">
    <property type="term" value="P:negative regulation of transcription by RNA polymerase II"/>
    <property type="evidence" value="ECO:0000318"/>
    <property type="project" value="GO_Central"/>
</dbReference>
<dbReference type="GO" id="GO:0070859">
    <property type="term" value="P:positive regulation of bile acid biosynthetic process"/>
    <property type="evidence" value="ECO:0000250"/>
    <property type="project" value="UniProtKB"/>
</dbReference>
<dbReference type="GO" id="GO:0045893">
    <property type="term" value="P:positive regulation of DNA-templated transcription"/>
    <property type="evidence" value="ECO:0000250"/>
    <property type="project" value="UniProtKB"/>
</dbReference>
<dbReference type="GO" id="GO:0045944">
    <property type="term" value="P:positive regulation of transcription by RNA polymerase II"/>
    <property type="evidence" value="ECO:0000318"/>
    <property type="project" value="GO_Central"/>
</dbReference>
<dbReference type="GO" id="GO:0010498">
    <property type="term" value="P:proteasomal protein catabolic process"/>
    <property type="evidence" value="ECO:0000250"/>
    <property type="project" value="UniProtKB"/>
</dbReference>
<dbReference type="GO" id="GO:0031648">
    <property type="term" value="P:protein destabilization"/>
    <property type="evidence" value="ECO:0000250"/>
    <property type="project" value="UniProtKB"/>
</dbReference>
<dbReference type="GO" id="GO:0042752">
    <property type="term" value="P:regulation of circadian rhythm"/>
    <property type="evidence" value="ECO:0000250"/>
    <property type="project" value="UniProtKB"/>
</dbReference>
<dbReference type="GO" id="GO:0042749">
    <property type="term" value="P:regulation of circadian sleep/wake cycle"/>
    <property type="evidence" value="ECO:0000250"/>
    <property type="project" value="UniProtKB"/>
</dbReference>
<dbReference type="GO" id="GO:0045598">
    <property type="term" value="P:regulation of fat cell differentiation"/>
    <property type="evidence" value="ECO:0000250"/>
    <property type="project" value="UniProtKB"/>
</dbReference>
<dbReference type="GO" id="GO:0061178">
    <property type="term" value="P:regulation of insulin secretion involved in cellular response to glucose stimulus"/>
    <property type="evidence" value="ECO:0000250"/>
    <property type="project" value="UniProtKB"/>
</dbReference>
<dbReference type="GO" id="GO:0019216">
    <property type="term" value="P:regulation of lipid metabolic process"/>
    <property type="evidence" value="ECO:0000250"/>
    <property type="project" value="UniProtKB"/>
</dbReference>
<dbReference type="GO" id="GO:0061469">
    <property type="term" value="P:regulation of type B pancreatic cell proliferation"/>
    <property type="evidence" value="ECO:0000250"/>
    <property type="project" value="UniProtKB"/>
</dbReference>
<dbReference type="GO" id="GO:0044321">
    <property type="term" value="P:response to leptin"/>
    <property type="evidence" value="ECO:0000250"/>
    <property type="project" value="UniProtKB"/>
</dbReference>
<dbReference type="CDD" id="cd07166">
    <property type="entry name" value="NR_DBD_REV_ERB"/>
    <property type="match status" value="1"/>
</dbReference>
<dbReference type="FunFam" id="3.30.50.10:FF:000013">
    <property type="entry name" value="Nuclear receptor subfamily 1 group D member 2"/>
    <property type="match status" value="1"/>
</dbReference>
<dbReference type="Gene3D" id="3.30.50.10">
    <property type="entry name" value="Erythroid Transcription Factor GATA-1, subunit A"/>
    <property type="match status" value="1"/>
</dbReference>
<dbReference type="Gene3D" id="1.10.565.10">
    <property type="entry name" value="Retinoid X Receptor"/>
    <property type="match status" value="1"/>
</dbReference>
<dbReference type="InterPro" id="IPR035500">
    <property type="entry name" value="NHR-like_dom_sf"/>
</dbReference>
<dbReference type="InterPro" id="IPR000536">
    <property type="entry name" value="Nucl_hrmn_rcpt_lig-bd"/>
</dbReference>
<dbReference type="InterPro" id="IPR050234">
    <property type="entry name" value="Nuclear_hormone_rcpt_NR1"/>
</dbReference>
<dbReference type="InterPro" id="IPR001723">
    <property type="entry name" value="Nuclear_hrmn_rcpt"/>
</dbReference>
<dbReference type="InterPro" id="IPR001628">
    <property type="entry name" value="Znf_hrmn_rcpt"/>
</dbReference>
<dbReference type="InterPro" id="IPR013088">
    <property type="entry name" value="Znf_NHR/GATA"/>
</dbReference>
<dbReference type="PANTHER" id="PTHR24082">
    <property type="entry name" value="NUCLEAR HORMONE RECEPTOR"/>
    <property type="match status" value="1"/>
</dbReference>
<dbReference type="PANTHER" id="PTHR24082:SF113">
    <property type="entry name" value="NUCLEAR RECEPTOR SUBFAMILY 1 GROUP D MEMBER 1"/>
    <property type="match status" value="1"/>
</dbReference>
<dbReference type="Pfam" id="PF00104">
    <property type="entry name" value="Hormone_recep"/>
    <property type="match status" value="1"/>
</dbReference>
<dbReference type="Pfam" id="PF00105">
    <property type="entry name" value="zf-C4"/>
    <property type="match status" value="1"/>
</dbReference>
<dbReference type="PRINTS" id="PR00398">
    <property type="entry name" value="STRDHORMONER"/>
</dbReference>
<dbReference type="PRINTS" id="PR00047">
    <property type="entry name" value="STROIDFINGER"/>
</dbReference>
<dbReference type="SMART" id="SM00430">
    <property type="entry name" value="HOLI"/>
    <property type="match status" value="1"/>
</dbReference>
<dbReference type="SMART" id="SM00399">
    <property type="entry name" value="ZnF_C4"/>
    <property type="match status" value="1"/>
</dbReference>
<dbReference type="SUPFAM" id="SSF57716">
    <property type="entry name" value="Glucocorticoid receptor-like (DNA-binding domain)"/>
    <property type="match status" value="1"/>
</dbReference>
<dbReference type="SUPFAM" id="SSF48508">
    <property type="entry name" value="Nuclear receptor ligand-binding domain"/>
    <property type="match status" value="1"/>
</dbReference>
<dbReference type="PROSITE" id="PS51843">
    <property type="entry name" value="NR_LBD"/>
    <property type="match status" value="1"/>
</dbReference>
<dbReference type="PROSITE" id="PS00031">
    <property type="entry name" value="NUCLEAR_REC_DBD_1"/>
    <property type="match status" value="1"/>
</dbReference>
<dbReference type="PROSITE" id="PS51030">
    <property type="entry name" value="NUCLEAR_REC_DBD_2"/>
    <property type="match status" value="1"/>
</dbReference>
<reference key="1">
    <citation type="submission" date="2006-09" db="EMBL/GenBank/DDBJ databases">
        <authorList>
            <consortium name="NIH - Mammalian Gene Collection (MGC) project"/>
        </authorList>
    </citation>
    <scope>NUCLEOTIDE SEQUENCE [LARGE SCALE MRNA]</scope>
    <source>
        <strain>Hereford</strain>
        <tissue>Thalamus</tissue>
    </source>
</reference>
<reference key="2">
    <citation type="journal article" date="2004" name="Hum. Mol. Genet.">
        <title>Photoreceptor-specific nuclear receptor NR2E3 functions as a transcriptional activator in rod photoreceptors.</title>
        <authorList>
            <person name="Cheng H."/>
            <person name="Khanna H."/>
            <person name="Oh E.C."/>
            <person name="Hicks D."/>
            <person name="Mitton K.P."/>
            <person name="Swaroop A."/>
        </authorList>
    </citation>
    <scope>INTERACTION WITH NR2E3</scope>
</reference>
<comment type="function">
    <text evidence="3">Transcriptional repressor which coordinates circadian rhythm and metabolic pathways in a heme-dependent manner. Integral component of the complex transcription machinery that governs circadian rhythmicity and forms a critical negative limb of the circadian clock by directly repressing the expression of core clock components BMAL1, CLOCK and CRY1. Also regulates genes involved in metabolic functions, including lipid and bile acid metabolism, adipogenesis, gluconeogenesis and the macrophage inflammatory response. Acts as a receptor for heme which stimulates its interaction with the NCOR1/HDAC3 corepressor complex, enhancing transcriptional repression. Recognizes two classes of DNA response elements within the promoter of its target genes and can bind to DNA as either monomers or homodimers, depending on the nature of the response element. Binds as a monomer to a response element composed of the consensus half-site motif 5'-[A/G]GGTCA-3' preceded by an A/T-rich 5' sequence (RevRE), or as a homodimer to a direct repeat of the core motif spaced by two nucleotides (RevDR-2). Acts as a potent competitive repressor of ROR alpha (RORA) function and regulates the levels of its ligand heme by repressing the expression of PPARGC1A, a potent inducer of heme synthesis. Regulates lipid metabolism by repressing the expression of APOC3 and by influencing the activity of sterol response element binding proteins (SREBPs); represses INSIG2 which interferes with the proteolytic activation of SREBPs which in turn govern the rhythmic expression of enzymes with key functions in sterol and fatty acid synthesis. Regulates gluconeogenesis via repression of G6PC1 and PEPCK and adipocyte differentiation via repression of PPARG. Regulates glucagon release in pancreatic alpha-cells via the AMPK-NAMPT-SIRT1 pathway and the proliferation, glucose-induced insulin secretion and expression of key lipogenic genes in pancreatic-beta cells. Positively regulates bile acid synthesis by increasing hepatic expression of CYP7A1 via repression of NR0B2 and NFIL3 which are negative regulators of CYP7A1. Modulates skeletal muscle oxidative capacity by regulating mitochondrial biogenesis and autophagy; controls mitochondrial biogenesis and respiration by interfering with the STK11-PRKAA1/2-SIRT1-PPARGC1A signaling pathway. Represses the expression of SERPINE1/PAI1, an important modulator of cardiovascular disease and the expression of inflammatory cytokines and chemokines in macrophages. Represses gene expression at a distance in macrophages by inhibiting the transcription of enhancer-derived RNAs (eRNAs). Plays a role in the circadian regulation of body temperature and negatively regulates thermogenic transcriptional programs in brown adipose tissue (BAT); imposes a circadian oscillation in BAT activity, increasing body temperature when awake and depressing thermogenesis during sleep. In concert with NR2E3, regulates transcriptional networks critical for photoreceptor development and function. In addition to its activity as a repressor, can also act as a transcriptional activator. In the ovarian granulosa cells acts as a transcriptional activator of STAR which plays a role in steroid biosynthesis. In collaboration with SP1, activates GJA1 transcription in a heme-independent manner (By similarity). Represses the transcription of CYP2B10, CYP4A10 and CYP4A14 (By similarity). Represses the transcription of CES2 (By similarity). Represses and regulates the circadian expression of TSHB in a NCOR1-dependent manner (By similarity). Negatively regulates the protein stability of NR3C1 and influences the time-dependent subcellular distribution of NR3C1, thereby affecting its transcriptional regulatory activity (By similarity). Plays a critical role in the circadian control of neutrophilic inflammation in the lung; under resting, non-stress conditions, acts as a rhythmic repressor to limit inflammatory activity whereas in the presence of inflammatory triggers undergoes ubiquitin-mediated degradation thereby relieving inhibition of the inflammatory response (By similarity). Plays a key role in the circadian regulation of microglial activation and neuroinflammation; suppresses microglial activation through the NF-kappaB pathway in the central nervous system (By similarity). Plays a role in the regulation of the diurnal rhythms of lipid and protein metabolism in the skeletal muscle via transcriptional repression of genes controlling lipid and amino acid metabolism in the muscle (By similarity).</text>
</comment>
<comment type="subunit">
    <text evidence="2 3 7">Binds DNA as a monomer or a homodimer (By similarity). Interacts with C1D, SP1 and ZNHIT1 (By similarity). Interacts with OPHN1 (via C-terminus) (By similarity). Interacts with PER2; the interaction associates PER2 to BMAL1 promoter region (By similarity). Interacts with CRY1 (By similarity). Interacts with CCAR2 (By similarity). Interacts with NR2E3 (PubMed:15190009). Interacts with SIAH2 (By similarity). Interacts with FBXW7 and CDK1 (By similarity). Interacts with HUWE1 (By similarity). Interacts with NR0B2 (By similarity). Interacts with NFIL3 (By similarity). Interacts (via domain NR LBD) with HSP90AA1 and HSP90AB1 (By similarity).</text>
</comment>
<comment type="subcellular location">
    <subcellularLocation>
        <location evidence="4">Nucleus</location>
    </subcellularLocation>
    <subcellularLocation>
        <location evidence="3">Cytoplasm</location>
    </subcellularLocation>
    <subcellularLocation>
        <location evidence="3">Cell projection</location>
        <location evidence="3">Dendrite</location>
    </subcellularLocation>
    <subcellularLocation>
        <location evidence="3">Cell projection</location>
        <location evidence="3">Dendritic spine</location>
    </subcellularLocation>
    <text evidence="3">Localizes to the cytoplasm, dendrites and dendritic spine in the presence of OPHN1. Localizes predominantly to the nucleus at ZT8 whereas it is cytoplasmic at ZT20. Phosphorylation by CSNK1E enhances its cytoplasmic localization.</text>
</comment>
<comment type="tissue specificity">
    <text>Expressed in all tissues and cell lines examined. Expressed at high levels in some squamous carcinoma cell lines.</text>
</comment>
<comment type="domain">
    <text>Composed of three domains: a modulating N-terminal domain, a DNA-binding domain and a C-terminal ligand-binding domain.</text>
</comment>
<comment type="PTM">
    <text evidence="2 3">Ubiquitinated, leading to its proteasomal degradation (By similarity). Ubiquitinated by the SCF(FBXW7) complex when phosphorylated by CDK1 leading to its proteasomal degradation (By similarity). Ubiquitinated by SIAH2; leading to its proteasomal degradation (By similarity). Rapidly ubiquitinated in response to inflammatory triggers and sumoylation is a prerequisite to its ubiquitination (By similarity).</text>
</comment>
<comment type="PTM">
    <text evidence="3">Sumoylated by UBE2I, desumoylated by SENP1, and sumoylation is a prerequisite to its ubiquitination.</text>
</comment>
<comment type="PTM">
    <text evidence="3">Phosphorylated by CSNK1E; phosphorylation enhances its cytoplasmic localization.</text>
</comment>
<comment type="PTM">
    <text evidence="3">Undergoes lysosome-mediated degradation in a time-dependent manner in the liver.</text>
</comment>
<comment type="similarity">
    <text evidence="8">Belongs to the nuclear hormone receptor family. NR1 subfamily.</text>
</comment>
<name>NR1D1_BOVIN</name>
<evidence type="ECO:0000250" key="1"/>
<evidence type="ECO:0000250" key="2">
    <source>
        <dbReference type="UniProtKB" id="P20393"/>
    </source>
</evidence>
<evidence type="ECO:0000250" key="3">
    <source>
        <dbReference type="UniProtKB" id="Q3UV55"/>
    </source>
</evidence>
<evidence type="ECO:0000255" key="4">
    <source>
        <dbReference type="PROSITE-ProRule" id="PRU00407"/>
    </source>
</evidence>
<evidence type="ECO:0000255" key="5">
    <source>
        <dbReference type="PROSITE-ProRule" id="PRU01189"/>
    </source>
</evidence>
<evidence type="ECO:0000256" key="6">
    <source>
        <dbReference type="SAM" id="MobiDB-lite"/>
    </source>
</evidence>
<evidence type="ECO:0000269" key="7">
    <source>
    </source>
</evidence>
<evidence type="ECO:0000305" key="8"/>
<gene>
    <name type="primary">NR1D1</name>
</gene>
<sequence>MTTLDSNNNTGGVITYIGSSGSSPNRTSPESLYSDSSNGSFQSLTQGCPTYFPPSPTGSLTQDPARSFGSIPPSLGDDGSPSSSSSSSSSSSSSFYNGSPPGGLQVALEDSNRVSPSKSTSNITKLNGMVLLCKVCGDVASGFHYGVHACEGCKGFFRRSIQQNIQYKRCLKNENCSIVRINRNRCQQCRFKKCLSVGMSRDAVRFGRIPKREKQRMLAEMQSAMNLANNQLSSQCPLETPPTQHPTPGPMGPSPPPAPAPSPLVGFSQFPQQLTPPRSPSPEPTVEDVISQVARAHREIFTYAHDKLGTSPGNFNANHASGNRPATTPHRWESQGCPPANDNIMAAQRHNEALNSLRQASSSYPPPWPPGAAHHSCHQPNSNGHRLCPTHVYPAPEGEAPVNSPRQGNSKNILLACPMNMYPHGRSGRTVQEIWEDFSMSFTPAVREVVEFAKHIPGFRDLSQHDQVTLLKAGTFEVLMVRFASLFNVKDQTVMFLSRTTYSLQELGAMGMGDLLNAMFDFSEKLNSLALTEEELGLFTAVVLVSADRSGMENSASVEQLQETLLRALRALVLKNRPSETSRFTKLLLKLPDLRTLNNMHSEKLLSFRVDAQ</sequence>